<proteinExistence type="inferred from homology"/>
<feature type="initiator methionine" description="Removed" evidence="1">
    <location>
        <position position="1"/>
    </location>
</feature>
<feature type="chain" id="PRO_0000172222" description="S-ribosylhomocysteine lyase">
    <location>
        <begin position="2"/>
        <end position="171"/>
    </location>
</feature>
<feature type="binding site" evidence="2">
    <location>
        <position position="54"/>
    </location>
    <ligand>
        <name>Fe cation</name>
        <dbReference type="ChEBI" id="CHEBI:24875"/>
    </ligand>
</feature>
<feature type="binding site" evidence="2">
    <location>
        <position position="58"/>
    </location>
    <ligand>
        <name>Fe cation</name>
        <dbReference type="ChEBI" id="CHEBI:24875"/>
    </ligand>
</feature>
<feature type="binding site" evidence="2">
    <location>
        <position position="128"/>
    </location>
    <ligand>
        <name>Fe cation</name>
        <dbReference type="ChEBI" id="CHEBI:24875"/>
    </ligand>
</feature>
<sequence>MPLLDSFTVDHTRMEAPAVRVAKTMNTPHGDAITVFDLRFCVPNKEVMPERGIHTLEHLFAGFMRNHLNGNGVEIIDISPMGCRTGFYMSLIGTPDEQRVADVWKAAMEDVLKVQDQNQIPELNVYQCGTYQMHSLQEAQDIARSILERDVRINSNEELALPKEKLQELHI</sequence>
<organism>
    <name type="scientific">Escherichia coli O157:H7</name>
    <dbReference type="NCBI Taxonomy" id="83334"/>
    <lineage>
        <taxon>Bacteria</taxon>
        <taxon>Pseudomonadati</taxon>
        <taxon>Pseudomonadota</taxon>
        <taxon>Gammaproteobacteria</taxon>
        <taxon>Enterobacterales</taxon>
        <taxon>Enterobacteriaceae</taxon>
        <taxon>Escherichia</taxon>
    </lineage>
</organism>
<accession>Q8X902</accession>
<name>LUXS_ECO57</name>
<gene>
    <name evidence="2" type="primary">luxS</name>
    <name type="ordered locus">Z3988</name>
    <name type="ordered locus">ECs3549</name>
</gene>
<evidence type="ECO:0000250" key="1"/>
<evidence type="ECO:0000255" key="2">
    <source>
        <dbReference type="HAMAP-Rule" id="MF_00091"/>
    </source>
</evidence>
<reference key="1">
    <citation type="journal article" date="2001" name="Nature">
        <title>Genome sequence of enterohaemorrhagic Escherichia coli O157:H7.</title>
        <authorList>
            <person name="Perna N.T."/>
            <person name="Plunkett G. III"/>
            <person name="Burland V."/>
            <person name="Mau B."/>
            <person name="Glasner J.D."/>
            <person name="Rose D.J."/>
            <person name="Mayhew G.F."/>
            <person name="Evans P.S."/>
            <person name="Gregor J."/>
            <person name="Kirkpatrick H.A."/>
            <person name="Posfai G."/>
            <person name="Hackett J."/>
            <person name="Klink S."/>
            <person name="Boutin A."/>
            <person name="Shao Y."/>
            <person name="Miller L."/>
            <person name="Grotbeck E.J."/>
            <person name="Davis N.W."/>
            <person name="Lim A."/>
            <person name="Dimalanta E.T."/>
            <person name="Potamousis K."/>
            <person name="Apodaca J."/>
            <person name="Anantharaman T.S."/>
            <person name="Lin J."/>
            <person name="Yen G."/>
            <person name="Schwartz D.C."/>
            <person name="Welch R.A."/>
            <person name="Blattner F.R."/>
        </authorList>
    </citation>
    <scope>NUCLEOTIDE SEQUENCE [LARGE SCALE GENOMIC DNA]</scope>
    <source>
        <strain>O157:H7 / EDL933 / ATCC 700927 / EHEC</strain>
    </source>
</reference>
<reference key="2">
    <citation type="journal article" date="2001" name="DNA Res.">
        <title>Complete genome sequence of enterohemorrhagic Escherichia coli O157:H7 and genomic comparison with a laboratory strain K-12.</title>
        <authorList>
            <person name="Hayashi T."/>
            <person name="Makino K."/>
            <person name="Ohnishi M."/>
            <person name="Kurokawa K."/>
            <person name="Ishii K."/>
            <person name="Yokoyama K."/>
            <person name="Han C.-G."/>
            <person name="Ohtsubo E."/>
            <person name="Nakayama K."/>
            <person name="Murata T."/>
            <person name="Tanaka M."/>
            <person name="Tobe T."/>
            <person name="Iida T."/>
            <person name="Takami H."/>
            <person name="Honda T."/>
            <person name="Sasakawa C."/>
            <person name="Ogasawara N."/>
            <person name="Yasunaga T."/>
            <person name="Kuhara S."/>
            <person name="Shiba T."/>
            <person name="Hattori M."/>
            <person name="Shinagawa H."/>
        </authorList>
    </citation>
    <scope>NUCLEOTIDE SEQUENCE [LARGE SCALE GENOMIC DNA]</scope>
    <source>
        <strain>O157:H7 / Sakai / RIMD 0509952 / EHEC</strain>
    </source>
</reference>
<dbReference type="EC" id="4.4.1.21" evidence="2"/>
<dbReference type="EMBL" id="AE005174">
    <property type="protein sequence ID" value="AAG57796.1"/>
    <property type="molecule type" value="Genomic_DNA"/>
</dbReference>
<dbReference type="EMBL" id="BA000007">
    <property type="protein sequence ID" value="BAB36972.1"/>
    <property type="molecule type" value="Genomic_DNA"/>
</dbReference>
<dbReference type="PIR" id="E91072">
    <property type="entry name" value="E91072"/>
</dbReference>
<dbReference type="PIR" id="H85916">
    <property type="entry name" value="H85916"/>
</dbReference>
<dbReference type="RefSeq" id="NP_311576.1">
    <property type="nucleotide sequence ID" value="NC_002695.1"/>
</dbReference>
<dbReference type="RefSeq" id="WP_001130215.1">
    <property type="nucleotide sequence ID" value="NZ_VOAI01000003.1"/>
</dbReference>
<dbReference type="SMR" id="Q8X902"/>
<dbReference type="STRING" id="155864.Z3988"/>
<dbReference type="GeneID" id="914734"/>
<dbReference type="KEGG" id="ece:Z3988"/>
<dbReference type="KEGG" id="ecs:ECs_3549"/>
<dbReference type="PATRIC" id="fig|386585.9.peg.3705"/>
<dbReference type="eggNOG" id="COG1854">
    <property type="taxonomic scope" value="Bacteria"/>
</dbReference>
<dbReference type="HOGENOM" id="CLU_107531_2_0_6"/>
<dbReference type="OMA" id="DVSPMGC"/>
<dbReference type="BRENDA" id="4.4.1.21">
    <property type="organism ID" value="2026"/>
</dbReference>
<dbReference type="Proteomes" id="UP000000558">
    <property type="component" value="Chromosome"/>
</dbReference>
<dbReference type="Proteomes" id="UP000002519">
    <property type="component" value="Chromosome"/>
</dbReference>
<dbReference type="GO" id="GO:0005506">
    <property type="term" value="F:iron ion binding"/>
    <property type="evidence" value="ECO:0007669"/>
    <property type="project" value="InterPro"/>
</dbReference>
<dbReference type="GO" id="GO:0043768">
    <property type="term" value="F:S-ribosylhomocysteine lyase activity"/>
    <property type="evidence" value="ECO:0007669"/>
    <property type="project" value="UniProtKB-UniRule"/>
</dbReference>
<dbReference type="GO" id="GO:0009372">
    <property type="term" value="P:quorum sensing"/>
    <property type="evidence" value="ECO:0007669"/>
    <property type="project" value="UniProtKB-UniRule"/>
</dbReference>
<dbReference type="FunFam" id="3.30.1360.80:FF:000001">
    <property type="entry name" value="S-ribosylhomocysteine lyase"/>
    <property type="match status" value="1"/>
</dbReference>
<dbReference type="Gene3D" id="3.30.1360.80">
    <property type="entry name" value="S-ribosylhomocysteinase (LuxS)"/>
    <property type="match status" value="1"/>
</dbReference>
<dbReference type="HAMAP" id="MF_00091">
    <property type="entry name" value="LuxS"/>
    <property type="match status" value="1"/>
</dbReference>
<dbReference type="InterPro" id="IPR037005">
    <property type="entry name" value="LuxS_sf"/>
</dbReference>
<dbReference type="InterPro" id="IPR011249">
    <property type="entry name" value="Metalloenz_LuxS/M16"/>
</dbReference>
<dbReference type="InterPro" id="IPR003815">
    <property type="entry name" value="S-ribosylhomocysteinase"/>
</dbReference>
<dbReference type="NCBIfam" id="NF002602">
    <property type="entry name" value="PRK02260.1-2"/>
    <property type="match status" value="1"/>
</dbReference>
<dbReference type="PANTHER" id="PTHR35799">
    <property type="entry name" value="S-RIBOSYLHOMOCYSTEINE LYASE"/>
    <property type="match status" value="1"/>
</dbReference>
<dbReference type="PANTHER" id="PTHR35799:SF1">
    <property type="entry name" value="S-RIBOSYLHOMOCYSTEINE LYASE"/>
    <property type="match status" value="1"/>
</dbReference>
<dbReference type="Pfam" id="PF02664">
    <property type="entry name" value="LuxS"/>
    <property type="match status" value="1"/>
</dbReference>
<dbReference type="PIRSF" id="PIRSF006160">
    <property type="entry name" value="AI2"/>
    <property type="match status" value="1"/>
</dbReference>
<dbReference type="PRINTS" id="PR01487">
    <property type="entry name" value="LUXSPROTEIN"/>
</dbReference>
<dbReference type="SUPFAM" id="SSF63411">
    <property type="entry name" value="LuxS/MPP-like metallohydrolase"/>
    <property type="match status" value="1"/>
</dbReference>
<protein>
    <recommendedName>
        <fullName evidence="2">S-ribosylhomocysteine lyase</fullName>
        <ecNumber evidence="2">4.4.1.21</ecNumber>
    </recommendedName>
    <alternativeName>
        <fullName evidence="2">AI-2 synthesis protein</fullName>
    </alternativeName>
    <alternativeName>
        <fullName evidence="2">Autoinducer-2 production protein LuxS</fullName>
    </alternativeName>
</protein>
<keyword id="KW-0071">Autoinducer synthesis</keyword>
<keyword id="KW-0408">Iron</keyword>
<keyword id="KW-0456">Lyase</keyword>
<keyword id="KW-0479">Metal-binding</keyword>
<keyword id="KW-0673">Quorum sensing</keyword>
<keyword id="KW-1185">Reference proteome</keyword>
<comment type="function">
    <text evidence="2">Involved in the synthesis of autoinducer 2 (AI-2) which is secreted by bacteria and is used to communicate both the cell density and the metabolic potential of the environment. The regulation of gene expression in response to changes in cell density is called quorum sensing. Catalyzes the transformation of S-ribosylhomocysteine (RHC) to homocysteine (HC) and 4,5-dihydroxy-2,3-pentadione (DPD).</text>
</comment>
<comment type="catalytic activity">
    <reaction evidence="2">
        <text>S-(5-deoxy-D-ribos-5-yl)-L-homocysteine = (S)-4,5-dihydroxypentane-2,3-dione + L-homocysteine</text>
        <dbReference type="Rhea" id="RHEA:17753"/>
        <dbReference type="ChEBI" id="CHEBI:29484"/>
        <dbReference type="ChEBI" id="CHEBI:58195"/>
        <dbReference type="ChEBI" id="CHEBI:58199"/>
        <dbReference type="EC" id="4.4.1.21"/>
    </reaction>
</comment>
<comment type="cofactor">
    <cofactor evidence="2">
        <name>Fe cation</name>
        <dbReference type="ChEBI" id="CHEBI:24875"/>
    </cofactor>
    <text evidence="2">Binds 1 Fe cation per subunit.</text>
</comment>
<comment type="subunit">
    <text evidence="2">Homodimer.</text>
</comment>
<comment type="similarity">
    <text evidence="2">Belongs to the LuxS family.</text>
</comment>